<comment type="function">
    <text evidence="2 3">Inhibitor of lipoprotein binding to the low density lipoprotein (LDL) receptor, LDL receptor-related protein, and very low density lipoprotein (VLDL) receptor. Associates with high density lipoproteins (HDL) and the triacylglycerol-rich lipoproteins in the plasma and makes up about 10% of the protein of the VLDL and 2% of that of HDL. Appears to interfere directly with fatty acid uptake and is also the major plasma inhibitor of cholesteryl ester transfer protein (CETP). Binds free fatty acids and reduces their intracellular esterification. Modulates the interaction of APOE with beta-migrating VLDL and inhibits binding of beta-VLDL to the LDL receptor-related protein.</text>
</comment>
<comment type="subcellular location">
    <subcellularLocation>
        <location evidence="2">Secreted</location>
    </subcellularLocation>
</comment>
<comment type="miscellaneous">
    <text evidence="5">Apolipoprotein C-I is present in acidic (APOC1A) and basic (APOC1B) forms in P.paniscus, P.abelii and P.troglodytes and perhaps also in baboons and macaques. The two genes for ApoC-I arose through a duplication process that occurred after the divergence of New World monkeys from the human lineage. In human, the acidic form has become a pseudogene sometime between the divergence of bonobos and chimpanzees from the human lineage and the appearance of the Denisovans. Pseudogenization resulted when the codon for the penultimate amino acid in the signal sequence was changed to a stop codon.</text>
</comment>
<comment type="similarity">
    <text evidence="6">Belongs to the apolipoprotein C1 family.</text>
</comment>
<sequence>MRLFLSLPVLVVVLLMILEGPGPAQGAPESVEASSGLDKLKEFGNNLEDKVREFFKRIKESDIPAKTRNWFSETLQKVKEKLRIES</sequence>
<dbReference type="EMBL" id="AC151887">
    <property type="status" value="NOT_ANNOTATED_CDS"/>
    <property type="molecule type" value="Genomic_DNA"/>
</dbReference>
<dbReference type="RefSeq" id="XP_039321475.1">
    <property type="nucleotide sequence ID" value="XM_039465541.1"/>
</dbReference>
<dbReference type="SMR" id="P0DKV5"/>
<dbReference type="GeneID" id="101050617"/>
<dbReference type="Proteomes" id="UP000233220">
    <property type="component" value="Whole Genome Shotgun Assembly"/>
</dbReference>
<dbReference type="GO" id="GO:0034364">
    <property type="term" value="C:high-density lipoprotein particle"/>
    <property type="evidence" value="ECO:0007669"/>
    <property type="project" value="TreeGrafter"/>
</dbReference>
<dbReference type="GO" id="GO:0034361">
    <property type="term" value="C:very-low-density lipoprotein particle"/>
    <property type="evidence" value="ECO:0007669"/>
    <property type="project" value="UniProtKB-KW"/>
</dbReference>
<dbReference type="GO" id="GO:0005504">
    <property type="term" value="F:fatty acid binding"/>
    <property type="evidence" value="ECO:0007669"/>
    <property type="project" value="TreeGrafter"/>
</dbReference>
<dbReference type="GO" id="GO:0004859">
    <property type="term" value="F:phospholipase inhibitor activity"/>
    <property type="evidence" value="ECO:0007669"/>
    <property type="project" value="TreeGrafter"/>
</dbReference>
<dbReference type="GO" id="GO:0006869">
    <property type="term" value="P:lipid transport"/>
    <property type="evidence" value="ECO:0007669"/>
    <property type="project" value="UniProtKB-KW"/>
</dbReference>
<dbReference type="GO" id="GO:0042157">
    <property type="term" value="P:lipoprotein metabolic process"/>
    <property type="evidence" value="ECO:0007669"/>
    <property type="project" value="InterPro"/>
</dbReference>
<dbReference type="GO" id="GO:0032375">
    <property type="term" value="P:negative regulation of cholesterol transport"/>
    <property type="evidence" value="ECO:0007669"/>
    <property type="project" value="TreeGrafter"/>
</dbReference>
<dbReference type="GO" id="GO:0050995">
    <property type="term" value="P:negative regulation of lipid catabolic process"/>
    <property type="evidence" value="ECO:0007669"/>
    <property type="project" value="TreeGrafter"/>
</dbReference>
<dbReference type="GO" id="GO:0010916">
    <property type="term" value="P:negative regulation of very-low-density lipoprotein particle clearance"/>
    <property type="evidence" value="ECO:0007669"/>
    <property type="project" value="TreeGrafter"/>
</dbReference>
<dbReference type="GO" id="GO:0006641">
    <property type="term" value="P:triglyceride metabolic process"/>
    <property type="evidence" value="ECO:0007669"/>
    <property type="project" value="TreeGrafter"/>
</dbReference>
<dbReference type="GO" id="GO:0034447">
    <property type="term" value="P:very-low-density lipoprotein particle clearance"/>
    <property type="evidence" value="ECO:0007669"/>
    <property type="project" value="TreeGrafter"/>
</dbReference>
<dbReference type="Gene3D" id="4.10.260.30">
    <property type="entry name" value="Apolipoprotein C-I"/>
    <property type="match status" value="1"/>
</dbReference>
<dbReference type="InterPro" id="IPR043081">
    <property type="entry name" value="ApoC-1_sf"/>
</dbReference>
<dbReference type="InterPro" id="IPR006781">
    <property type="entry name" value="ApoC-I"/>
</dbReference>
<dbReference type="PANTHER" id="PTHR16565">
    <property type="entry name" value="APOLIPOPROTEIN C-I"/>
    <property type="match status" value="1"/>
</dbReference>
<dbReference type="PANTHER" id="PTHR16565:SF2">
    <property type="entry name" value="APOLIPOPROTEIN C-I"/>
    <property type="match status" value="1"/>
</dbReference>
<dbReference type="Pfam" id="PF04691">
    <property type="entry name" value="ApoC-I"/>
    <property type="match status" value="1"/>
</dbReference>
<keyword id="KW-0445">Lipid transport</keyword>
<keyword id="KW-1185">Reference proteome</keyword>
<keyword id="KW-0964">Secreted</keyword>
<keyword id="KW-0732">Signal</keyword>
<keyword id="KW-0813">Transport</keyword>
<keyword id="KW-0850">VLDL</keyword>
<accession>P0DKV5</accession>
<protein>
    <recommendedName>
        <fullName>Apolipoprotein C-I</fullName>
        <shortName>Apo-CI</shortName>
        <shortName>ApoC-I</shortName>
    </recommendedName>
    <alternativeName>
        <fullName>Apolipoprotein C1</fullName>
    </alternativeName>
    <component>
        <recommendedName>
            <fullName>Truncated apolipoprotein C-I</fullName>
        </recommendedName>
    </component>
</protein>
<evidence type="ECO:0000250" key="1"/>
<evidence type="ECO:0000250" key="2">
    <source>
        <dbReference type="UniProtKB" id="P02654"/>
    </source>
</evidence>
<evidence type="ECO:0000250" key="3">
    <source>
        <dbReference type="UniProtKB" id="P33047"/>
    </source>
</evidence>
<evidence type="ECO:0000250" key="4">
    <source>
        <dbReference type="UniProtKB" id="P86336"/>
    </source>
</evidence>
<evidence type="ECO:0000303" key="5">
    <source>
    </source>
</evidence>
<evidence type="ECO:0000305" key="6"/>
<feature type="signal peptide" evidence="1">
    <location>
        <begin position="1"/>
        <end position="26"/>
    </location>
</feature>
<feature type="chain" id="PRO_0000420980" description="Apolipoprotein C-I">
    <location>
        <begin position="27"/>
        <end position="86"/>
    </location>
</feature>
<feature type="chain" id="PRO_0000420981" description="Truncated apolipoprotein C-I" evidence="4">
    <location>
        <begin position="29"/>
        <end position="86"/>
    </location>
</feature>
<name>APOC1_SAIBB</name>
<proteinExistence type="inferred from homology"/>
<gene>
    <name type="primary">APOC1</name>
</gene>
<organism>
    <name type="scientific">Saimiri boliviensis boliviensis</name>
    <name type="common">Bolivian squirrel monkey</name>
    <dbReference type="NCBI Taxonomy" id="39432"/>
    <lineage>
        <taxon>Eukaryota</taxon>
        <taxon>Metazoa</taxon>
        <taxon>Chordata</taxon>
        <taxon>Craniata</taxon>
        <taxon>Vertebrata</taxon>
        <taxon>Euteleostomi</taxon>
        <taxon>Mammalia</taxon>
        <taxon>Eutheria</taxon>
        <taxon>Euarchontoglires</taxon>
        <taxon>Primates</taxon>
        <taxon>Haplorrhini</taxon>
        <taxon>Platyrrhini</taxon>
        <taxon>Cebidae</taxon>
        <taxon>Saimiriinae</taxon>
        <taxon>Saimiri</taxon>
    </lineage>
</organism>
<reference key="1">
    <citation type="submission" date="2004-12" db="EMBL/GenBank/DDBJ databases">
        <authorList>
            <person name="Cheng J.-F."/>
            <person name="Hamilton M."/>
            <person name="Peng Y."/>
            <person name="Hosseini R."/>
            <person name="Peng Z."/>
            <person name="Malinov I."/>
            <person name="Rubin E.M."/>
        </authorList>
    </citation>
    <scope>NUCLEOTIDE SEQUENCE [LARGE SCALE GENOMIC DNA]</scope>
</reference>
<reference key="2">
    <citation type="unpublished observations" date="2012-11">
        <authorList>
            <person name="Puppione D.L."/>
        </authorList>
    </citation>
    <scope>IDENTIFICATION</scope>
</reference>
<reference key="3">
    <citation type="journal article" date="2013" name="Front. Biol.">
        <title>Proteogenomic Review of the Changes in Primate apoC-I during Evolution.</title>
        <authorList>
            <person name="Puppione D."/>
            <person name="Whitelegge J.P."/>
        </authorList>
    </citation>
    <scope>REVIEW</scope>
</reference>
<reference key="4">
    <citation type="journal article" date="2014" name="Comp. Biochem. Physiol.">
        <title>Higher primates, but not New World monkeys, have a duplicate set of enhancers flanking their apoC-I genes.</title>
        <authorList>
            <person name="Puppione D.L."/>
        </authorList>
    </citation>
    <scope>GENE DUPLICATION</scope>
</reference>